<organism>
    <name type="scientific">Solanum bulbocastanum</name>
    <name type="common">Wild potato</name>
    <dbReference type="NCBI Taxonomy" id="147425"/>
    <lineage>
        <taxon>Eukaryota</taxon>
        <taxon>Viridiplantae</taxon>
        <taxon>Streptophyta</taxon>
        <taxon>Embryophyta</taxon>
        <taxon>Tracheophyta</taxon>
        <taxon>Spermatophyta</taxon>
        <taxon>Magnoliopsida</taxon>
        <taxon>eudicotyledons</taxon>
        <taxon>Gunneridae</taxon>
        <taxon>Pentapetalae</taxon>
        <taxon>asterids</taxon>
        <taxon>lamiids</taxon>
        <taxon>Solanales</taxon>
        <taxon>Solanaceae</taxon>
        <taxon>Solanoideae</taxon>
        <taxon>Solaneae</taxon>
        <taxon>Solanum</taxon>
    </lineage>
</organism>
<comment type="subcellular location">
    <subcellularLocation>
        <location>Plastid</location>
        <location>Chloroplast</location>
    </subcellularLocation>
</comment>
<comment type="similarity">
    <text evidence="1">Belongs to the universal ribosomal protein uS2 family.</text>
</comment>
<reference key="1">
    <citation type="journal article" date="2006" name="Theor. Appl. Genet.">
        <title>Complete chloroplast genome sequences of Solanum bulbocastanum, Solanum lycopersicum and comparative analyses with other Solanaceae genomes.</title>
        <authorList>
            <person name="Daniell H."/>
            <person name="Lee S.-B."/>
            <person name="Grevich J."/>
            <person name="Saski C."/>
            <person name="Quesada-Vargas T."/>
            <person name="Guda C."/>
            <person name="Tomkins J."/>
            <person name="Jansen R.K."/>
        </authorList>
    </citation>
    <scope>NUCLEOTIDE SEQUENCE [LARGE SCALE GENOMIC DNA]</scope>
    <source>
        <strain>cv. PT29</strain>
    </source>
</reference>
<protein>
    <recommendedName>
        <fullName evidence="1">Small ribosomal subunit protein uS2c</fullName>
    </recommendedName>
    <alternativeName>
        <fullName>30S ribosomal protein S2, chloroplastic</fullName>
    </alternativeName>
</protein>
<accession>Q2MIJ8</accession>
<gene>
    <name type="primary">rps2</name>
</gene>
<sequence>MTRRYWNINLEEMMEAGVHFGHGTRKWNPKMAPYISAKRKGIHITNLTRTARFLSEACDLVFDAASRGKQFLIVGTKNKAADSVEWAAIRARCHYVNKKWLGGMLTNWSTTETRLHKFRDLRMEQKTGRLNRLPKRDAAMLKRQLSRLQTYLGGIKYMTGVPDIVIIVDQHEEYTALRECITLGIPTICLTDTNCDPDLADISIPANDDAISSIRLILNKLVFAICEGRSSYIRNP</sequence>
<geneLocation type="chloroplast"/>
<proteinExistence type="inferred from homology"/>
<feature type="chain" id="PRO_0000352158" description="Small ribosomal subunit protein uS2c">
    <location>
        <begin position="1"/>
        <end position="236"/>
    </location>
</feature>
<dbReference type="EMBL" id="DQ347958">
    <property type="protein sequence ID" value="ABC56202.1"/>
    <property type="molecule type" value="Genomic_DNA"/>
</dbReference>
<dbReference type="RefSeq" id="YP_538837.1">
    <property type="nucleotide sequence ID" value="NC_007943.1"/>
</dbReference>
<dbReference type="SMR" id="Q2MIJ8"/>
<dbReference type="GeneID" id="3989540"/>
<dbReference type="GO" id="GO:0009507">
    <property type="term" value="C:chloroplast"/>
    <property type="evidence" value="ECO:0007669"/>
    <property type="project" value="UniProtKB-SubCell"/>
</dbReference>
<dbReference type="GO" id="GO:0005763">
    <property type="term" value="C:mitochondrial small ribosomal subunit"/>
    <property type="evidence" value="ECO:0007669"/>
    <property type="project" value="TreeGrafter"/>
</dbReference>
<dbReference type="GO" id="GO:0003735">
    <property type="term" value="F:structural constituent of ribosome"/>
    <property type="evidence" value="ECO:0007669"/>
    <property type="project" value="InterPro"/>
</dbReference>
<dbReference type="GO" id="GO:0006412">
    <property type="term" value="P:translation"/>
    <property type="evidence" value="ECO:0007669"/>
    <property type="project" value="UniProtKB-UniRule"/>
</dbReference>
<dbReference type="CDD" id="cd01425">
    <property type="entry name" value="RPS2"/>
    <property type="match status" value="1"/>
</dbReference>
<dbReference type="FunFam" id="3.40.50.10490:FF:000101">
    <property type="match status" value="1"/>
</dbReference>
<dbReference type="FunFam" id="1.10.287.610:FF:000001">
    <property type="entry name" value="30S ribosomal protein S2"/>
    <property type="match status" value="1"/>
</dbReference>
<dbReference type="FunFam" id="3.40.50.10490:FF:000008">
    <property type="entry name" value="30S ribosomal protein S2, chloroplastic"/>
    <property type="match status" value="1"/>
</dbReference>
<dbReference type="Gene3D" id="3.40.50.10490">
    <property type="entry name" value="Glucose-6-phosphate isomerase like protein, domain 1"/>
    <property type="match status" value="1"/>
</dbReference>
<dbReference type="Gene3D" id="1.10.287.610">
    <property type="entry name" value="Helix hairpin bin"/>
    <property type="match status" value="1"/>
</dbReference>
<dbReference type="HAMAP" id="MF_00291_B">
    <property type="entry name" value="Ribosomal_uS2_B"/>
    <property type="match status" value="1"/>
</dbReference>
<dbReference type="InterPro" id="IPR001865">
    <property type="entry name" value="Ribosomal_uS2"/>
</dbReference>
<dbReference type="InterPro" id="IPR005706">
    <property type="entry name" value="Ribosomal_uS2_bac/mit/plastid"/>
</dbReference>
<dbReference type="InterPro" id="IPR018130">
    <property type="entry name" value="Ribosomal_uS2_CS"/>
</dbReference>
<dbReference type="InterPro" id="IPR023591">
    <property type="entry name" value="Ribosomal_uS2_flav_dom_sf"/>
</dbReference>
<dbReference type="NCBIfam" id="TIGR01011">
    <property type="entry name" value="rpsB_bact"/>
    <property type="match status" value="1"/>
</dbReference>
<dbReference type="PANTHER" id="PTHR12534">
    <property type="entry name" value="30S RIBOSOMAL PROTEIN S2 PROKARYOTIC AND ORGANELLAR"/>
    <property type="match status" value="1"/>
</dbReference>
<dbReference type="PANTHER" id="PTHR12534:SF0">
    <property type="entry name" value="SMALL RIBOSOMAL SUBUNIT PROTEIN US2M"/>
    <property type="match status" value="1"/>
</dbReference>
<dbReference type="Pfam" id="PF00318">
    <property type="entry name" value="Ribosomal_S2"/>
    <property type="match status" value="1"/>
</dbReference>
<dbReference type="PRINTS" id="PR00395">
    <property type="entry name" value="RIBOSOMALS2"/>
</dbReference>
<dbReference type="SUPFAM" id="SSF52313">
    <property type="entry name" value="Ribosomal protein S2"/>
    <property type="match status" value="1"/>
</dbReference>
<dbReference type="PROSITE" id="PS00962">
    <property type="entry name" value="RIBOSOMAL_S2_1"/>
    <property type="match status" value="1"/>
</dbReference>
<dbReference type="PROSITE" id="PS00963">
    <property type="entry name" value="RIBOSOMAL_S2_2"/>
    <property type="match status" value="1"/>
</dbReference>
<name>RR2_SOLBU</name>
<keyword id="KW-0150">Chloroplast</keyword>
<keyword id="KW-0934">Plastid</keyword>
<keyword id="KW-0687">Ribonucleoprotein</keyword>
<keyword id="KW-0689">Ribosomal protein</keyword>
<evidence type="ECO:0000305" key="1"/>